<accession>B3PK63</accession>
<reference key="1">
    <citation type="journal article" date="2008" name="J. Bacteriol.">
        <title>Insights into plant cell wall degradation from the genome sequence of the soil bacterium Cellvibrio japonicus.</title>
        <authorList>
            <person name="DeBoy R.T."/>
            <person name="Mongodin E.F."/>
            <person name="Fouts D.E."/>
            <person name="Tailford L.E."/>
            <person name="Khouri H."/>
            <person name="Emerson J.B."/>
            <person name="Mohamoud Y."/>
            <person name="Watkins K."/>
            <person name="Henrissat B."/>
            <person name="Gilbert H.J."/>
            <person name="Nelson K.E."/>
        </authorList>
    </citation>
    <scope>NUCLEOTIDE SEQUENCE [LARGE SCALE GENOMIC DNA]</scope>
    <source>
        <strain>Ueda107</strain>
    </source>
</reference>
<keyword id="KW-1185">Reference proteome</keyword>
<keyword id="KW-0687">Ribonucleoprotein</keyword>
<keyword id="KW-0689">Ribosomal protein</keyword>
<feature type="chain" id="PRO_1000144393" description="Large ribosomal subunit protein bL17">
    <location>
        <begin position="1"/>
        <end position="132"/>
    </location>
</feature>
<evidence type="ECO:0000255" key="1">
    <source>
        <dbReference type="HAMAP-Rule" id="MF_01368"/>
    </source>
</evidence>
<evidence type="ECO:0000305" key="2"/>
<dbReference type="EMBL" id="CP000934">
    <property type="protein sequence ID" value="ACE84779.1"/>
    <property type="molecule type" value="Genomic_DNA"/>
</dbReference>
<dbReference type="RefSeq" id="WP_012486388.1">
    <property type="nucleotide sequence ID" value="NC_010995.1"/>
</dbReference>
<dbReference type="SMR" id="B3PK63"/>
<dbReference type="STRING" id="498211.CJA_0725"/>
<dbReference type="KEGG" id="cja:CJA_0725"/>
<dbReference type="eggNOG" id="COG0203">
    <property type="taxonomic scope" value="Bacteria"/>
</dbReference>
<dbReference type="HOGENOM" id="CLU_074407_2_0_6"/>
<dbReference type="OrthoDB" id="9809073at2"/>
<dbReference type="Proteomes" id="UP000001036">
    <property type="component" value="Chromosome"/>
</dbReference>
<dbReference type="GO" id="GO:0022625">
    <property type="term" value="C:cytosolic large ribosomal subunit"/>
    <property type="evidence" value="ECO:0007669"/>
    <property type="project" value="TreeGrafter"/>
</dbReference>
<dbReference type="GO" id="GO:0003735">
    <property type="term" value="F:structural constituent of ribosome"/>
    <property type="evidence" value="ECO:0007669"/>
    <property type="project" value="InterPro"/>
</dbReference>
<dbReference type="GO" id="GO:0006412">
    <property type="term" value="P:translation"/>
    <property type="evidence" value="ECO:0007669"/>
    <property type="project" value="UniProtKB-UniRule"/>
</dbReference>
<dbReference type="FunFam" id="3.90.1030.10:FF:000001">
    <property type="entry name" value="50S ribosomal protein L17"/>
    <property type="match status" value="1"/>
</dbReference>
<dbReference type="Gene3D" id="3.90.1030.10">
    <property type="entry name" value="Ribosomal protein L17"/>
    <property type="match status" value="1"/>
</dbReference>
<dbReference type="HAMAP" id="MF_01368">
    <property type="entry name" value="Ribosomal_bL17"/>
    <property type="match status" value="1"/>
</dbReference>
<dbReference type="InterPro" id="IPR000456">
    <property type="entry name" value="Ribosomal_bL17"/>
</dbReference>
<dbReference type="InterPro" id="IPR047859">
    <property type="entry name" value="Ribosomal_bL17_CS"/>
</dbReference>
<dbReference type="InterPro" id="IPR036373">
    <property type="entry name" value="Ribosomal_bL17_sf"/>
</dbReference>
<dbReference type="NCBIfam" id="TIGR00059">
    <property type="entry name" value="L17"/>
    <property type="match status" value="1"/>
</dbReference>
<dbReference type="PANTHER" id="PTHR14413:SF16">
    <property type="entry name" value="LARGE RIBOSOMAL SUBUNIT PROTEIN BL17M"/>
    <property type="match status" value="1"/>
</dbReference>
<dbReference type="PANTHER" id="PTHR14413">
    <property type="entry name" value="RIBOSOMAL PROTEIN L17"/>
    <property type="match status" value="1"/>
</dbReference>
<dbReference type="Pfam" id="PF01196">
    <property type="entry name" value="Ribosomal_L17"/>
    <property type="match status" value="1"/>
</dbReference>
<dbReference type="SUPFAM" id="SSF64263">
    <property type="entry name" value="Prokaryotic ribosomal protein L17"/>
    <property type="match status" value="1"/>
</dbReference>
<dbReference type="PROSITE" id="PS01167">
    <property type="entry name" value="RIBOSOMAL_L17"/>
    <property type="match status" value="1"/>
</dbReference>
<comment type="subunit">
    <text evidence="1">Part of the 50S ribosomal subunit. Contacts protein L32.</text>
</comment>
<comment type="similarity">
    <text evidence="1">Belongs to the bacterial ribosomal protein bL17 family.</text>
</comment>
<sequence length="132" mass="14756">MRHRLSGRQLGRNSSHRKAMFRNMSASLVEHELIKTTLPKAKELRRVIEPLITLAKVDSVANRRLANARLQSKSAVGKLFSELGKRYATRPGGYVRILKCGFRAGDKAPMAYVELVDRPARAVETAVEVDAE</sequence>
<protein>
    <recommendedName>
        <fullName evidence="1">Large ribosomal subunit protein bL17</fullName>
    </recommendedName>
    <alternativeName>
        <fullName evidence="2">50S ribosomal protein L17</fullName>
    </alternativeName>
</protein>
<gene>
    <name evidence="1" type="primary">rplQ</name>
    <name type="ordered locus">CJA_0725</name>
</gene>
<name>RL17_CELJU</name>
<proteinExistence type="inferred from homology"/>
<organism>
    <name type="scientific">Cellvibrio japonicus (strain Ueda107)</name>
    <name type="common">Pseudomonas fluorescens subsp. cellulosa</name>
    <dbReference type="NCBI Taxonomy" id="498211"/>
    <lineage>
        <taxon>Bacteria</taxon>
        <taxon>Pseudomonadati</taxon>
        <taxon>Pseudomonadota</taxon>
        <taxon>Gammaproteobacteria</taxon>
        <taxon>Cellvibrionales</taxon>
        <taxon>Cellvibrionaceae</taxon>
        <taxon>Cellvibrio</taxon>
    </lineage>
</organism>